<sequence>MSKIIGIDLGTTNSAVAVLEGGEAKIIPNPEGARTTPSVVGFKNGERQVGEVAKRAAITNPNTISSIKRHMGTNYKETIEGKDYSPQEISAIILQYLKSYAEDYLGETVDKAVITVPAYFNDAQRQATKDAGKIAGLEVERIINEPTAAALAYGMDKTETDQTILVFDLGGGTFDVSILELGDGVFEVHSTAGDNELGGDDFDKKIIDYLVAEFKKDNGIDLSQDKMALQRLKDAAEKAKKDLSGVTSTQISLPFITAGEAGPLHLEVTLTRAKFDELTHDLVERTIAPTRQALKDANLSASDIDQVILVGGSTRIPAVQETIKKELGKEPHKGVNPDEVVAMGAAIQGGVITGDVKDVVLLDVTPLSLGIETMGGVMTTLIERNTTIPTSKSQTFSTAADNQPAVDIHVLQGERPMAKDNKTLGRFQLADIPPAPRGIPQIEVSFDIDKNGIVTVRAKDLGTGKEQNIVIKSSSGLTDEEIEKMVQDAEANAEEDKKNKENAELRNNADQLVFTVDKTLKELEGKVEEEEVKKAEAARDELQEALKGEDFDAIKEKTESLNEIVQNLSVKLYEQAAAEQQAAGGAEGQEAPQNDDVVDAEFEEVNDDDKENK</sequence>
<comment type="function">
    <text evidence="1">Acts as a chaperone.</text>
</comment>
<comment type="induction">
    <text evidence="1">By stress conditions e.g. heat shock (By similarity).</text>
</comment>
<comment type="similarity">
    <text evidence="3">Belongs to the heat shock protein 70 family.</text>
</comment>
<evidence type="ECO:0000250" key="1"/>
<evidence type="ECO:0000256" key="2">
    <source>
        <dbReference type="SAM" id="MobiDB-lite"/>
    </source>
</evidence>
<evidence type="ECO:0000305" key="3"/>
<reference key="1">
    <citation type="journal article" date="2001" name="Science">
        <title>Comparative genomics of Listeria species.</title>
        <authorList>
            <person name="Glaser P."/>
            <person name="Frangeul L."/>
            <person name="Buchrieser C."/>
            <person name="Rusniok C."/>
            <person name="Amend A."/>
            <person name="Baquero F."/>
            <person name="Berche P."/>
            <person name="Bloecker H."/>
            <person name="Brandt P."/>
            <person name="Chakraborty T."/>
            <person name="Charbit A."/>
            <person name="Chetouani F."/>
            <person name="Couve E."/>
            <person name="de Daruvar A."/>
            <person name="Dehoux P."/>
            <person name="Domann E."/>
            <person name="Dominguez-Bernal G."/>
            <person name="Duchaud E."/>
            <person name="Durant L."/>
            <person name="Dussurget O."/>
            <person name="Entian K.-D."/>
            <person name="Fsihi H."/>
            <person name="Garcia-del Portillo F."/>
            <person name="Garrido P."/>
            <person name="Gautier L."/>
            <person name="Goebel W."/>
            <person name="Gomez-Lopez N."/>
            <person name="Hain T."/>
            <person name="Hauf J."/>
            <person name="Jackson D."/>
            <person name="Jones L.-M."/>
            <person name="Kaerst U."/>
            <person name="Kreft J."/>
            <person name="Kuhn M."/>
            <person name="Kunst F."/>
            <person name="Kurapkat G."/>
            <person name="Madueno E."/>
            <person name="Maitournam A."/>
            <person name="Mata Vicente J."/>
            <person name="Ng E."/>
            <person name="Nedjari H."/>
            <person name="Nordsiek G."/>
            <person name="Novella S."/>
            <person name="de Pablos B."/>
            <person name="Perez-Diaz J.-C."/>
            <person name="Purcell R."/>
            <person name="Remmel B."/>
            <person name="Rose M."/>
            <person name="Schlueter T."/>
            <person name="Simoes N."/>
            <person name="Tierrez A."/>
            <person name="Vazquez-Boland J.-A."/>
            <person name="Voss H."/>
            <person name="Wehland J."/>
            <person name="Cossart P."/>
        </authorList>
    </citation>
    <scope>NUCLEOTIDE SEQUENCE [LARGE SCALE GENOMIC DNA]</scope>
    <source>
        <strain>ATCC BAA-679 / EGD-e</strain>
    </source>
</reference>
<keyword id="KW-0067">ATP-binding</keyword>
<keyword id="KW-0143">Chaperone</keyword>
<keyword id="KW-0547">Nucleotide-binding</keyword>
<keyword id="KW-0597">Phosphoprotein</keyword>
<keyword id="KW-1185">Reference proteome</keyword>
<keyword id="KW-0346">Stress response</keyword>
<gene>
    <name type="primary">dnaK</name>
    <name type="ordered locus">lmo1473</name>
</gene>
<protein>
    <recommendedName>
        <fullName>Chaperone protein DnaK</fullName>
    </recommendedName>
    <alternativeName>
        <fullName>HSP70</fullName>
    </alternativeName>
    <alternativeName>
        <fullName>Heat shock 70 kDa protein</fullName>
    </alternativeName>
    <alternativeName>
        <fullName>Heat shock protein 70</fullName>
    </alternativeName>
</protein>
<accession>P0DJM2</accession>
<accession>Q9S5A4</accession>
<dbReference type="EMBL" id="AL591979">
    <property type="protein sequence ID" value="CAC99551.1"/>
    <property type="molecule type" value="Genomic_DNA"/>
</dbReference>
<dbReference type="PIR" id="AI1258">
    <property type="entry name" value="AI1258"/>
</dbReference>
<dbReference type="RefSeq" id="NP_464998.1">
    <property type="nucleotide sequence ID" value="NC_003210.1"/>
</dbReference>
<dbReference type="RefSeq" id="WP_003721980.1">
    <property type="nucleotide sequence ID" value="NZ_CP149495.1"/>
</dbReference>
<dbReference type="SMR" id="P0DJM2"/>
<dbReference type="STRING" id="169963.gene:17594130"/>
<dbReference type="PaxDb" id="169963-lmo1473"/>
<dbReference type="EnsemblBacteria" id="CAC99551">
    <property type="protein sequence ID" value="CAC99551"/>
    <property type="gene ID" value="CAC99551"/>
</dbReference>
<dbReference type="GeneID" id="986290"/>
<dbReference type="KEGG" id="lmo:lmo1473"/>
<dbReference type="PATRIC" id="fig|169963.11.peg.1513"/>
<dbReference type="eggNOG" id="COG0443">
    <property type="taxonomic scope" value="Bacteria"/>
</dbReference>
<dbReference type="HOGENOM" id="CLU_005965_2_4_9"/>
<dbReference type="OrthoDB" id="9766019at2"/>
<dbReference type="PhylomeDB" id="P0DJM2"/>
<dbReference type="BioCyc" id="LMON169963:LMO1473-MONOMER"/>
<dbReference type="Proteomes" id="UP000000817">
    <property type="component" value="Chromosome"/>
</dbReference>
<dbReference type="GO" id="GO:0005524">
    <property type="term" value="F:ATP binding"/>
    <property type="evidence" value="ECO:0007669"/>
    <property type="project" value="UniProtKB-UniRule"/>
</dbReference>
<dbReference type="GO" id="GO:0016887">
    <property type="term" value="F:ATP hydrolysis activity"/>
    <property type="evidence" value="ECO:0000318"/>
    <property type="project" value="GO_Central"/>
</dbReference>
<dbReference type="GO" id="GO:0140662">
    <property type="term" value="F:ATP-dependent protein folding chaperone"/>
    <property type="evidence" value="ECO:0007669"/>
    <property type="project" value="InterPro"/>
</dbReference>
<dbReference type="GO" id="GO:0031072">
    <property type="term" value="F:heat shock protein binding"/>
    <property type="evidence" value="ECO:0000318"/>
    <property type="project" value="GO_Central"/>
</dbReference>
<dbReference type="GO" id="GO:0044183">
    <property type="term" value="F:protein folding chaperone"/>
    <property type="evidence" value="ECO:0000318"/>
    <property type="project" value="GO_Central"/>
</dbReference>
<dbReference type="GO" id="GO:0051082">
    <property type="term" value="F:unfolded protein binding"/>
    <property type="evidence" value="ECO:0007669"/>
    <property type="project" value="InterPro"/>
</dbReference>
<dbReference type="GO" id="GO:0051085">
    <property type="term" value="P:chaperone cofactor-dependent protein refolding"/>
    <property type="evidence" value="ECO:0000318"/>
    <property type="project" value="GO_Central"/>
</dbReference>
<dbReference type="GO" id="GO:0042026">
    <property type="term" value="P:protein refolding"/>
    <property type="evidence" value="ECO:0000318"/>
    <property type="project" value="GO_Central"/>
</dbReference>
<dbReference type="CDD" id="cd10234">
    <property type="entry name" value="ASKHA_NBD_HSP70_DnaK-like"/>
    <property type="match status" value="1"/>
</dbReference>
<dbReference type="FunFam" id="2.60.34.10:FF:000014">
    <property type="entry name" value="Chaperone protein DnaK HSP70"/>
    <property type="match status" value="1"/>
</dbReference>
<dbReference type="FunFam" id="1.20.1270.10:FF:000001">
    <property type="entry name" value="Molecular chaperone DnaK"/>
    <property type="match status" value="1"/>
</dbReference>
<dbReference type="FunFam" id="3.30.420.40:FF:000071">
    <property type="entry name" value="Molecular chaperone DnaK"/>
    <property type="match status" value="1"/>
</dbReference>
<dbReference type="FunFam" id="3.90.640.10:FF:000003">
    <property type="entry name" value="Molecular chaperone DnaK"/>
    <property type="match status" value="1"/>
</dbReference>
<dbReference type="Gene3D" id="1.20.1270.10">
    <property type="match status" value="1"/>
</dbReference>
<dbReference type="Gene3D" id="3.30.420.40">
    <property type="match status" value="2"/>
</dbReference>
<dbReference type="Gene3D" id="3.90.640.10">
    <property type="entry name" value="Actin, Chain A, domain 4"/>
    <property type="match status" value="1"/>
</dbReference>
<dbReference type="Gene3D" id="2.60.34.10">
    <property type="entry name" value="Substrate Binding Domain Of DNAk, Chain A, domain 1"/>
    <property type="match status" value="1"/>
</dbReference>
<dbReference type="HAMAP" id="MF_00332">
    <property type="entry name" value="DnaK"/>
    <property type="match status" value="1"/>
</dbReference>
<dbReference type="InterPro" id="IPR043129">
    <property type="entry name" value="ATPase_NBD"/>
</dbReference>
<dbReference type="InterPro" id="IPR012725">
    <property type="entry name" value="Chaperone_DnaK"/>
</dbReference>
<dbReference type="InterPro" id="IPR018181">
    <property type="entry name" value="Heat_shock_70_CS"/>
</dbReference>
<dbReference type="InterPro" id="IPR029048">
    <property type="entry name" value="HSP70_C_sf"/>
</dbReference>
<dbReference type="InterPro" id="IPR029047">
    <property type="entry name" value="HSP70_peptide-bd_sf"/>
</dbReference>
<dbReference type="InterPro" id="IPR013126">
    <property type="entry name" value="Hsp_70_fam"/>
</dbReference>
<dbReference type="NCBIfam" id="NF001413">
    <property type="entry name" value="PRK00290.1"/>
    <property type="match status" value="1"/>
</dbReference>
<dbReference type="NCBIfam" id="TIGR02350">
    <property type="entry name" value="prok_dnaK"/>
    <property type="match status" value="1"/>
</dbReference>
<dbReference type="PANTHER" id="PTHR19375">
    <property type="entry name" value="HEAT SHOCK PROTEIN 70KDA"/>
    <property type="match status" value="1"/>
</dbReference>
<dbReference type="Pfam" id="PF00012">
    <property type="entry name" value="HSP70"/>
    <property type="match status" value="1"/>
</dbReference>
<dbReference type="PRINTS" id="PR00301">
    <property type="entry name" value="HEATSHOCK70"/>
</dbReference>
<dbReference type="SUPFAM" id="SSF53067">
    <property type="entry name" value="Actin-like ATPase domain"/>
    <property type="match status" value="2"/>
</dbReference>
<dbReference type="SUPFAM" id="SSF100934">
    <property type="entry name" value="Heat shock protein 70kD (HSP70), C-terminal subdomain"/>
    <property type="match status" value="1"/>
</dbReference>
<dbReference type="SUPFAM" id="SSF100920">
    <property type="entry name" value="Heat shock protein 70kD (HSP70), peptide-binding domain"/>
    <property type="match status" value="1"/>
</dbReference>
<dbReference type="PROSITE" id="PS00297">
    <property type="entry name" value="HSP70_1"/>
    <property type="match status" value="1"/>
</dbReference>
<dbReference type="PROSITE" id="PS00329">
    <property type="entry name" value="HSP70_2"/>
    <property type="match status" value="1"/>
</dbReference>
<dbReference type="PROSITE" id="PS01036">
    <property type="entry name" value="HSP70_3"/>
    <property type="match status" value="1"/>
</dbReference>
<name>DNAK_LISMO</name>
<organism>
    <name type="scientific">Listeria monocytogenes serovar 1/2a (strain ATCC BAA-679 / EGD-e)</name>
    <dbReference type="NCBI Taxonomy" id="169963"/>
    <lineage>
        <taxon>Bacteria</taxon>
        <taxon>Bacillati</taxon>
        <taxon>Bacillota</taxon>
        <taxon>Bacilli</taxon>
        <taxon>Bacillales</taxon>
        <taxon>Listeriaceae</taxon>
        <taxon>Listeria</taxon>
    </lineage>
</organism>
<proteinExistence type="inferred from homology"/>
<feature type="initiator methionine" description="Removed" evidence="1">
    <location>
        <position position="1"/>
    </location>
</feature>
<feature type="chain" id="PRO_0000078484" description="Chaperone protein DnaK">
    <location>
        <begin position="2"/>
        <end position="613"/>
    </location>
</feature>
<feature type="region of interest" description="Disordered" evidence="2">
    <location>
        <begin position="578"/>
        <end position="613"/>
    </location>
</feature>
<feature type="compositionally biased region" description="Low complexity" evidence="2">
    <location>
        <begin position="578"/>
        <end position="591"/>
    </location>
</feature>
<feature type="compositionally biased region" description="Acidic residues" evidence="2">
    <location>
        <begin position="596"/>
        <end position="613"/>
    </location>
</feature>
<feature type="modified residue" description="Phosphothreonine; by autocatalysis" evidence="1">
    <location>
        <position position="173"/>
    </location>
</feature>